<reference key="1">
    <citation type="journal article" date="1998" name="Science">
        <title>Genome sequence of the nematode C. elegans: a platform for investigating biology.</title>
        <authorList>
            <consortium name="The C. elegans sequencing consortium"/>
        </authorList>
    </citation>
    <scope>NUCLEOTIDE SEQUENCE [LARGE SCALE GENOMIC DNA]</scope>
    <source>
        <strain>Bristol N2</strain>
    </source>
</reference>
<evidence type="ECO:0000250" key="1"/>
<evidence type="ECO:0000256" key="2">
    <source>
        <dbReference type="SAM" id="MobiDB-lite"/>
    </source>
</evidence>
<evidence type="ECO:0000305" key="3"/>
<name>H2B3_CAEEL</name>
<keyword id="KW-0158">Chromosome</keyword>
<keyword id="KW-0238">DNA-binding</keyword>
<keyword id="KW-0325">Glycoprotein</keyword>
<keyword id="KW-1017">Isopeptide bond</keyword>
<keyword id="KW-0544">Nucleosome core</keyword>
<keyword id="KW-0539">Nucleus</keyword>
<keyword id="KW-1185">Reference proteome</keyword>
<keyword id="KW-0832">Ubl conjugation</keyword>
<proteinExistence type="inferred from homology"/>
<sequence>MAPPKPSAKGAKKAAKTVSKPKDGKKRKHARKESYSVYIYRVLKQVHPDTGVSSKAMSIMNSFVNDVFERIASEASRLAHYNKRSTISSREIQTAVRLILPGELAKHAVSEGTKAVTKYTSSK</sequence>
<protein>
    <recommendedName>
        <fullName>Probable histone H2B 3</fullName>
    </recommendedName>
</protein>
<organism>
    <name type="scientific">Caenorhabditis elegans</name>
    <dbReference type="NCBI Taxonomy" id="6239"/>
    <lineage>
        <taxon>Eukaryota</taxon>
        <taxon>Metazoa</taxon>
        <taxon>Ecdysozoa</taxon>
        <taxon>Nematoda</taxon>
        <taxon>Chromadorea</taxon>
        <taxon>Rhabditida</taxon>
        <taxon>Rhabditina</taxon>
        <taxon>Rhabditomorpha</taxon>
        <taxon>Rhabditoidea</taxon>
        <taxon>Rhabditidae</taxon>
        <taxon>Peloderinae</taxon>
        <taxon>Caenorhabditis</taxon>
    </lineage>
</organism>
<dbReference type="EMBL" id="Z70750">
    <property type="protein sequence ID" value="CAA94740.1"/>
    <property type="molecule type" value="Genomic_DNA"/>
</dbReference>
<dbReference type="PIR" id="G89162">
    <property type="entry name" value="G89162"/>
</dbReference>
<dbReference type="RefSeq" id="NP_505464.1">
    <property type="nucleotide sequence ID" value="NM_073063.6"/>
</dbReference>
<dbReference type="SMR" id="Q27484"/>
<dbReference type="BioGRID" id="44378">
    <property type="interactions" value="7"/>
</dbReference>
<dbReference type="DIP" id="DIP-26248N"/>
<dbReference type="FunCoup" id="Q27484">
    <property type="interactions" value="998"/>
</dbReference>
<dbReference type="STRING" id="6239.C50F4.5.1"/>
<dbReference type="GlyCosmos" id="Q27484">
    <property type="glycosylation" value="1 site, No reported glycans"/>
</dbReference>
<dbReference type="PaxDb" id="6239-C50F4.5"/>
<dbReference type="PeptideAtlas" id="Q27484"/>
<dbReference type="EnsemblMetazoa" id="C50F4.5.1">
    <property type="protein sequence ID" value="C50F4.5.1"/>
    <property type="gene ID" value="WBGene00001915"/>
</dbReference>
<dbReference type="GeneID" id="179340"/>
<dbReference type="KEGG" id="cel:CELE_C50F4.5"/>
<dbReference type="UCSC" id="C50F4.5">
    <property type="organism name" value="c. elegans"/>
</dbReference>
<dbReference type="AGR" id="WB:WBGene00001915"/>
<dbReference type="CTD" id="179340"/>
<dbReference type="WormBase" id="C50F4.5">
    <property type="protein sequence ID" value="CE05470"/>
    <property type="gene ID" value="WBGene00001915"/>
    <property type="gene designation" value="his-41"/>
</dbReference>
<dbReference type="eggNOG" id="KOG1744">
    <property type="taxonomic scope" value="Eukaryota"/>
</dbReference>
<dbReference type="GeneTree" id="ENSGT01130000278348"/>
<dbReference type="HOGENOM" id="CLU_075666_2_1_1"/>
<dbReference type="InParanoid" id="Q27484"/>
<dbReference type="OrthoDB" id="5807605at2759"/>
<dbReference type="PhylomeDB" id="Q27484"/>
<dbReference type="PRO" id="PR:Q27484"/>
<dbReference type="Proteomes" id="UP000001940">
    <property type="component" value="Chromosome V"/>
</dbReference>
<dbReference type="Bgee" id="WBGene00001915">
    <property type="expression patterns" value="Expressed in pharyngeal muscle cell (C elegans) and 3 other cell types or tissues"/>
</dbReference>
<dbReference type="GO" id="GO:0000786">
    <property type="term" value="C:nucleosome"/>
    <property type="evidence" value="ECO:0007669"/>
    <property type="project" value="UniProtKB-KW"/>
</dbReference>
<dbReference type="GO" id="GO:0005634">
    <property type="term" value="C:nucleus"/>
    <property type="evidence" value="ECO:0007669"/>
    <property type="project" value="UniProtKB-SubCell"/>
</dbReference>
<dbReference type="GO" id="GO:0003677">
    <property type="term" value="F:DNA binding"/>
    <property type="evidence" value="ECO:0000318"/>
    <property type="project" value="GO_Central"/>
</dbReference>
<dbReference type="GO" id="GO:0046982">
    <property type="term" value="F:protein heterodimerization activity"/>
    <property type="evidence" value="ECO:0007669"/>
    <property type="project" value="InterPro"/>
</dbReference>
<dbReference type="GO" id="GO:0044877">
    <property type="term" value="F:protein-containing complex binding"/>
    <property type="evidence" value="ECO:0000250"/>
    <property type="project" value="UniProtKB"/>
</dbReference>
<dbReference type="GO" id="GO:0030527">
    <property type="term" value="F:structural constituent of chromatin"/>
    <property type="evidence" value="ECO:0007669"/>
    <property type="project" value="InterPro"/>
</dbReference>
<dbReference type="CDD" id="cd22910">
    <property type="entry name" value="HFD_H2B"/>
    <property type="match status" value="1"/>
</dbReference>
<dbReference type="FunFam" id="1.10.20.10:FF:000016">
    <property type="entry name" value="Histone H2B"/>
    <property type="match status" value="1"/>
</dbReference>
<dbReference type="Gene3D" id="1.10.20.10">
    <property type="entry name" value="Histone, subunit A"/>
    <property type="match status" value="1"/>
</dbReference>
<dbReference type="InterPro" id="IPR009072">
    <property type="entry name" value="Histone-fold"/>
</dbReference>
<dbReference type="InterPro" id="IPR007125">
    <property type="entry name" value="Histone_H2A/H2B/H3"/>
</dbReference>
<dbReference type="InterPro" id="IPR000558">
    <property type="entry name" value="Histone_H2B"/>
</dbReference>
<dbReference type="InterPro" id="IPR055333">
    <property type="entry name" value="HISTONE_H2B_site"/>
</dbReference>
<dbReference type="PANTHER" id="PTHR23428">
    <property type="entry name" value="HISTONE H2B"/>
    <property type="match status" value="1"/>
</dbReference>
<dbReference type="Pfam" id="PF00125">
    <property type="entry name" value="Histone"/>
    <property type="match status" value="1"/>
</dbReference>
<dbReference type="PRINTS" id="PR00621">
    <property type="entry name" value="HISTONEH2B"/>
</dbReference>
<dbReference type="SMART" id="SM00427">
    <property type="entry name" value="H2B"/>
    <property type="match status" value="1"/>
</dbReference>
<dbReference type="SUPFAM" id="SSF47113">
    <property type="entry name" value="Histone-fold"/>
    <property type="match status" value="1"/>
</dbReference>
<dbReference type="PROSITE" id="PS00357">
    <property type="entry name" value="HISTONE_H2B"/>
    <property type="match status" value="1"/>
</dbReference>
<gene>
    <name type="primary">his-41</name>
    <name type="ORF">C50F4.5</name>
</gene>
<feature type="initiator methionine" description="Removed" evidence="1">
    <location>
        <position position="1"/>
    </location>
</feature>
<feature type="chain" id="PRO_0000071869" description="Probable histone H2B 3">
    <location>
        <begin position="2"/>
        <end position="123"/>
    </location>
</feature>
<feature type="region of interest" description="Disordered" evidence="2">
    <location>
        <begin position="1"/>
        <end position="31"/>
    </location>
</feature>
<feature type="glycosylation site" description="O-linked (GlcNAc) serine" evidence="1">
    <location>
        <position position="110"/>
    </location>
</feature>
<feature type="cross-link" description="Glycyl lysine isopeptide (Lys-Gly) (interchain with G-Cter in ubiquitin)" evidence="1">
    <location>
        <position position="118"/>
    </location>
</feature>
<accession>Q27484</accession>
<comment type="function">
    <text>Core component of nucleosome. Nucleosomes wrap and compact DNA into chromatin, limiting DNA accessibility to the cellular machineries which require DNA as a template. Histones thereby play a central role in transcription regulation, DNA repair, DNA replication and chromosomal stability. DNA accessibility is regulated via a complex set of post-translational modifications of histones, also called histone code, and nucleosome remodeling.</text>
</comment>
<comment type="subunit">
    <text>The nucleosome is a histone octamer containing two molecules each of H2A, H2B, H3 and H4 assembled in one H3-H4 heterotetramer and two H2A-H2B heterodimers. The octamer wraps approximately 147 bp of DNA.</text>
</comment>
<comment type="subcellular location">
    <subcellularLocation>
        <location>Nucleus</location>
    </subcellularLocation>
    <subcellularLocation>
        <location>Chromosome</location>
    </subcellularLocation>
</comment>
<comment type="PTM">
    <text evidence="1">Monoubiquitination of Lys-118 gives a specific tag for epigenetic transcriptional activation and is also prerequisite for histone H3 'Lys-4' and 'Lys-79' methylation.</text>
</comment>
<comment type="PTM">
    <text evidence="1">GlcNAcylation at Ser-110 promotes monoubiquitination of Lys-118. It fluctuates in response to extracellular glucose, and associates with transcribed genes (By similarity).</text>
</comment>
<comment type="similarity">
    <text evidence="3">Belongs to the histone H2B family.</text>
</comment>